<proteinExistence type="inferred from homology"/>
<protein>
    <recommendedName>
        <fullName evidence="1">1-deoxy-D-xylulose-5-phosphate synthase</fullName>
        <ecNumber evidence="1">2.2.1.7</ecNumber>
    </recommendedName>
    <alternativeName>
        <fullName evidence="1">1-deoxyxylulose-5-phosphate synthase</fullName>
        <shortName evidence="1">DXP synthase</shortName>
        <shortName evidence="1">DXPS</shortName>
    </alternativeName>
</protein>
<reference key="1">
    <citation type="submission" date="2007-07" db="EMBL/GenBank/DDBJ databases">
        <title>Complete genome sequence of Campylobacter jejuni subsp doylei 269.97 isolated from human blood.</title>
        <authorList>
            <person name="Fouts D.E."/>
            <person name="Mongodin E.F."/>
            <person name="Puiu D."/>
            <person name="Sebastian Y."/>
            <person name="Miller W.G."/>
            <person name="Mandrell R.E."/>
            <person name="Lastovica A.J."/>
            <person name="Nelson K.E."/>
        </authorList>
    </citation>
    <scope>NUCLEOTIDE SEQUENCE [LARGE SCALE GENOMIC DNA]</scope>
    <source>
        <strain>ATCC BAA-1458 / RM4099 / 269.97</strain>
    </source>
</reference>
<dbReference type="EC" id="2.2.1.7" evidence="1"/>
<dbReference type="EMBL" id="CP000768">
    <property type="protein sequence ID" value="ABS44468.1"/>
    <property type="molecule type" value="Genomic_DNA"/>
</dbReference>
<dbReference type="SMR" id="A7H552"/>
<dbReference type="KEGG" id="cjd:JJD26997_1642"/>
<dbReference type="HOGENOM" id="CLU_009227_1_4_7"/>
<dbReference type="UniPathway" id="UPA00064">
    <property type="reaction ID" value="UER00091"/>
</dbReference>
<dbReference type="Proteomes" id="UP000002302">
    <property type="component" value="Chromosome"/>
</dbReference>
<dbReference type="GO" id="GO:0005829">
    <property type="term" value="C:cytosol"/>
    <property type="evidence" value="ECO:0007669"/>
    <property type="project" value="TreeGrafter"/>
</dbReference>
<dbReference type="GO" id="GO:0008661">
    <property type="term" value="F:1-deoxy-D-xylulose-5-phosphate synthase activity"/>
    <property type="evidence" value="ECO:0007669"/>
    <property type="project" value="UniProtKB-UniRule"/>
</dbReference>
<dbReference type="GO" id="GO:0000287">
    <property type="term" value="F:magnesium ion binding"/>
    <property type="evidence" value="ECO:0007669"/>
    <property type="project" value="UniProtKB-UniRule"/>
</dbReference>
<dbReference type="GO" id="GO:0030976">
    <property type="term" value="F:thiamine pyrophosphate binding"/>
    <property type="evidence" value="ECO:0007669"/>
    <property type="project" value="UniProtKB-UniRule"/>
</dbReference>
<dbReference type="GO" id="GO:0052865">
    <property type="term" value="P:1-deoxy-D-xylulose 5-phosphate biosynthetic process"/>
    <property type="evidence" value="ECO:0007669"/>
    <property type="project" value="UniProtKB-UniPathway"/>
</dbReference>
<dbReference type="GO" id="GO:0019288">
    <property type="term" value="P:isopentenyl diphosphate biosynthetic process, methylerythritol 4-phosphate pathway"/>
    <property type="evidence" value="ECO:0007669"/>
    <property type="project" value="TreeGrafter"/>
</dbReference>
<dbReference type="GO" id="GO:0016114">
    <property type="term" value="P:terpenoid biosynthetic process"/>
    <property type="evidence" value="ECO:0007669"/>
    <property type="project" value="UniProtKB-UniRule"/>
</dbReference>
<dbReference type="GO" id="GO:0009228">
    <property type="term" value="P:thiamine biosynthetic process"/>
    <property type="evidence" value="ECO:0007669"/>
    <property type="project" value="UniProtKB-UniRule"/>
</dbReference>
<dbReference type="CDD" id="cd02007">
    <property type="entry name" value="TPP_DXS"/>
    <property type="match status" value="1"/>
</dbReference>
<dbReference type="CDD" id="cd07033">
    <property type="entry name" value="TPP_PYR_DXS_TK_like"/>
    <property type="match status" value="1"/>
</dbReference>
<dbReference type="Gene3D" id="3.40.50.920">
    <property type="match status" value="1"/>
</dbReference>
<dbReference type="Gene3D" id="3.40.50.970">
    <property type="match status" value="2"/>
</dbReference>
<dbReference type="HAMAP" id="MF_00315">
    <property type="entry name" value="DXP_synth"/>
    <property type="match status" value="1"/>
</dbReference>
<dbReference type="InterPro" id="IPR005477">
    <property type="entry name" value="Dxylulose-5-P_synthase"/>
</dbReference>
<dbReference type="InterPro" id="IPR029061">
    <property type="entry name" value="THDP-binding"/>
</dbReference>
<dbReference type="InterPro" id="IPR009014">
    <property type="entry name" value="Transketo_C/PFOR_II"/>
</dbReference>
<dbReference type="InterPro" id="IPR005475">
    <property type="entry name" value="Transketolase-like_Pyr-bd"/>
</dbReference>
<dbReference type="InterPro" id="IPR020826">
    <property type="entry name" value="Transketolase_BS"/>
</dbReference>
<dbReference type="InterPro" id="IPR033248">
    <property type="entry name" value="Transketolase_C"/>
</dbReference>
<dbReference type="InterPro" id="IPR049557">
    <property type="entry name" value="Transketolase_CS"/>
</dbReference>
<dbReference type="NCBIfam" id="TIGR00204">
    <property type="entry name" value="dxs"/>
    <property type="match status" value="1"/>
</dbReference>
<dbReference type="NCBIfam" id="NF003933">
    <property type="entry name" value="PRK05444.2-2"/>
    <property type="match status" value="1"/>
</dbReference>
<dbReference type="PANTHER" id="PTHR43322">
    <property type="entry name" value="1-D-DEOXYXYLULOSE 5-PHOSPHATE SYNTHASE-RELATED"/>
    <property type="match status" value="1"/>
</dbReference>
<dbReference type="PANTHER" id="PTHR43322:SF5">
    <property type="entry name" value="1-DEOXY-D-XYLULOSE-5-PHOSPHATE SYNTHASE, CHLOROPLASTIC"/>
    <property type="match status" value="1"/>
</dbReference>
<dbReference type="Pfam" id="PF13292">
    <property type="entry name" value="DXP_synthase_N"/>
    <property type="match status" value="1"/>
</dbReference>
<dbReference type="Pfam" id="PF02779">
    <property type="entry name" value="Transket_pyr"/>
    <property type="match status" value="1"/>
</dbReference>
<dbReference type="Pfam" id="PF02780">
    <property type="entry name" value="Transketolase_C"/>
    <property type="match status" value="1"/>
</dbReference>
<dbReference type="SMART" id="SM00861">
    <property type="entry name" value="Transket_pyr"/>
    <property type="match status" value="1"/>
</dbReference>
<dbReference type="SUPFAM" id="SSF52518">
    <property type="entry name" value="Thiamin diphosphate-binding fold (THDP-binding)"/>
    <property type="match status" value="2"/>
</dbReference>
<dbReference type="SUPFAM" id="SSF52922">
    <property type="entry name" value="TK C-terminal domain-like"/>
    <property type="match status" value="1"/>
</dbReference>
<dbReference type="PROSITE" id="PS00801">
    <property type="entry name" value="TRANSKETOLASE_1"/>
    <property type="match status" value="1"/>
</dbReference>
<dbReference type="PROSITE" id="PS00802">
    <property type="entry name" value="TRANSKETOLASE_2"/>
    <property type="match status" value="1"/>
</dbReference>
<name>DXS_CAMJD</name>
<organism>
    <name type="scientific">Campylobacter jejuni subsp. doylei (strain ATCC BAA-1458 / RM4099 / 269.97)</name>
    <dbReference type="NCBI Taxonomy" id="360109"/>
    <lineage>
        <taxon>Bacteria</taxon>
        <taxon>Pseudomonadati</taxon>
        <taxon>Campylobacterota</taxon>
        <taxon>Epsilonproteobacteria</taxon>
        <taxon>Campylobacterales</taxon>
        <taxon>Campylobacteraceae</taxon>
        <taxon>Campylobacter</taxon>
    </lineage>
</organism>
<keyword id="KW-0414">Isoprene biosynthesis</keyword>
<keyword id="KW-0460">Magnesium</keyword>
<keyword id="KW-0479">Metal-binding</keyword>
<keyword id="KW-0784">Thiamine biosynthesis</keyword>
<keyword id="KW-0786">Thiamine pyrophosphate</keyword>
<keyword id="KW-0808">Transferase</keyword>
<evidence type="ECO:0000255" key="1">
    <source>
        <dbReference type="HAMAP-Rule" id="MF_00315"/>
    </source>
</evidence>
<gene>
    <name evidence="1" type="primary">dxs</name>
    <name type="ordered locus">JJD26997_1642</name>
</gene>
<feature type="chain" id="PRO_1000019016" description="1-deoxy-D-xylulose-5-phosphate synthase">
    <location>
        <begin position="1"/>
        <end position="615"/>
    </location>
</feature>
<feature type="binding site" evidence="1">
    <location>
        <position position="72"/>
    </location>
    <ligand>
        <name>thiamine diphosphate</name>
        <dbReference type="ChEBI" id="CHEBI:58937"/>
    </ligand>
</feature>
<feature type="binding site" evidence="1">
    <location>
        <begin position="111"/>
        <end position="113"/>
    </location>
    <ligand>
        <name>thiamine diphosphate</name>
        <dbReference type="ChEBI" id="CHEBI:58937"/>
    </ligand>
</feature>
<feature type="binding site" evidence="1">
    <location>
        <position position="142"/>
    </location>
    <ligand>
        <name>Mg(2+)</name>
        <dbReference type="ChEBI" id="CHEBI:18420"/>
    </ligand>
</feature>
<feature type="binding site" evidence="1">
    <location>
        <begin position="143"/>
        <end position="144"/>
    </location>
    <ligand>
        <name>thiamine diphosphate</name>
        <dbReference type="ChEBI" id="CHEBI:58937"/>
    </ligand>
</feature>
<feature type="binding site" evidence="1">
    <location>
        <position position="171"/>
    </location>
    <ligand>
        <name>Mg(2+)</name>
        <dbReference type="ChEBI" id="CHEBI:18420"/>
    </ligand>
</feature>
<feature type="binding site" evidence="1">
    <location>
        <position position="171"/>
    </location>
    <ligand>
        <name>thiamine diphosphate</name>
        <dbReference type="ChEBI" id="CHEBI:58937"/>
    </ligand>
</feature>
<feature type="binding site" evidence="1">
    <location>
        <position position="278"/>
    </location>
    <ligand>
        <name>thiamine diphosphate</name>
        <dbReference type="ChEBI" id="CHEBI:58937"/>
    </ligand>
</feature>
<feature type="binding site" evidence="1">
    <location>
        <position position="360"/>
    </location>
    <ligand>
        <name>thiamine diphosphate</name>
        <dbReference type="ChEBI" id="CHEBI:58937"/>
    </ligand>
</feature>
<sequence>MSKKFAHTQEELEKLSLKELENLAASMREKIIQVVSKNGGHLSSNLGAVELSIAMHLVFDAKKDPFIFDVSHQSYTHKLLSGKEEIFDTLRQINGLSGYTKPSEGDYFVAGHSSTSISLAVGACKAIALKGEKRIPVALIGDGALSAGMVYEALNELGDSKFPCVILLNDNEMSISKPIGAISKYLSQAMATQFYQSFKKRIAKMLDILPNSATYMAKRFEESFKLITPGLLFEELGLEYIGPIDGHNLGEIISALKQAKAIQKPCVIHAQTVKGKGYALAEGKHAKWHGVGAFDIDSGESVKKNDAKKSATEIFSKNLLDLASKYENIVGVTAAMPSGTGLDKLIEKYPNRFWDVAIAEQHAVTSMAAMAKEGFKPFIAIYSTFLQRAYDQVIHDCAIMNLNVVFAMDRAGIVGEDGETHQGVFDLSFLAPLPNFTLLAPRDEQMMHNIMEYAYLHQGPIAFRYPRGSFILDEEFNPCEIKFGKAQWLVKNSSEIAFLGYGQGVAKAWQVLRALQEMNNNANLIDLIFAKPLDEELLCELAKKSKIWFIFSENVKIGGIESLINNFLQKYDLHVKVISFEYEDKFIEHGKTSEVEKNLEKDINSLLTKVLKFHH</sequence>
<accession>A7H552</accession>
<comment type="function">
    <text evidence="1">Catalyzes the acyloin condensation reaction between C atoms 2 and 3 of pyruvate and glyceraldehyde 3-phosphate to yield 1-deoxy-D-xylulose-5-phosphate (DXP).</text>
</comment>
<comment type="catalytic activity">
    <reaction evidence="1">
        <text>D-glyceraldehyde 3-phosphate + pyruvate + H(+) = 1-deoxy-D-xylulose 5-phosphate + CO2</text>
        <dbReference type="Rhea" id="RHEA:12605"/>
        <dbReference type="ChEBI" id="CHEBI:15361"/>
        <dbReference type="ChEBI" id="CHEBI:15378"/>
        <dbReference type="ChEBI" id="CHEBI:16526"/>
        <dbReference type="ChEBI" id="CHEBI:57792"/>
        <dbReference type="ChEBI" id="CHEBI:59776"/>
        <dbReference type="EC" id="2.2.1.7"/>
    </reaction>
</comment>
<comment type="cofactor">
    <cofactor evidence="1">
        <name>Mg(2+)</name>
        <dbReference type="ChEBI" id="CHEBI:18420"/>
    </cofactor>
    <text evidence="1">Binds 1 Mg(2+) ion per subunit.</text>
</comment>
<comment type="cofactor">
    <cofactor evidence="1">
        <name>thiamine diphosphate</name>
        <dbReference type="ChEBI" id="CHEBI:58937"/>
    </cofactor>
    <text evidence="1">Binds 1 thiamine pyrophosphate per subunit.</text>
</comment>
<comment type="pathway">
    <text evidence="1">Metabolic intermediate biosynthesis; 1-deoxy-D-xylulose 5-phosphate biosynthesis; 1-deoxy-D-xylulose 5-phosphate from D-glyceraldehyde 3-phosphate and pyruvate: step 1/1.</text>
</comment>
<comment type="subunit">
    <text evidence="1">Homodimer.</text>
</comment>
<comment type="similarity">
    <text evidence="1">Belongs to the transketolase family. DXPS subfamily.</text>
</comment>